<gene>
    <name evidence="1" type="primary">thiC</name>
    <name type="ordered locus">BURPS1106A_1401</name>
</gene>
<feature type="chain" id="PRO_1000004744" description="Phosphomethylpyrimidine synthase">
    <location>
        <begin position="1"/>
        <end position="643"/>
    </location>
</feature>
<feature type="binding site" evidence="1">
    <location>
        <position position="248"/>
    </location>
    <ligand>
        <name>substrate</name>
    </ligand>
</feature>
<feature type="binding site" evidence="1">
    <location>
        <position position="277"/>
    </location>
    <ligand>
        <name>substrate</name>
    </ligand>
</feature>
<feature type="binding site" evidence="1">
    <location>
        <position position="306"/>
    </location>
    <ligand>
        <name>substrate</name>
    </ligand>
</feature>
<feature type="binding site" evidence="1">
    <location>
        <position position="342"/>
    </location>
    <ligand>
        <name>substrate</name>
    </ligand>
</feature>
<feature type="binding site" evidence="1">
    <location>
        <begin position="362"/>
        <end position="364"/>
    </location>
    <ligand>
        <name>substrate</name>
    </ligand>
</feature>
<feature type="binding site" evidence="1">
    <location>
        <begin position="403"/>
        <end position="406"/>
    </location>
    <ligand>
        <name>substrate</name>
    </ligand>
</feature>
<feature type="binding site" evidence="1">
    <location>
        <position position="442"/>
    </location>
    <ligand>
        <name>substrate</name>
    </ligand>
</feature>
<feature type="binding site" evidence="1">
    <location>
        <position position="446"/>
    </location>
    <ligand>
        <name>Zn(2+)</name>
        <dbReference type="ChEBI" id="CHEBI:29105"/>
    </ligand>
</feature>
<feature type="binding site" evidence="1">
    <location>
        <position position="469"/>
    </location>
    <ligand>
        <name>substrate</name>
    </ligand>
</feature>
<feature type="binding site" evidence="1">
    <location>
        <position position="510"/>
    </location>
    <ligand>
        <name>Zn(2+)</name>
        <dbReference type="ChEBI" id="CHEBI:29105"/>
    </ligand>
</feature>
<feature type="binding site" evidence="1">
    <location>
        <position position="590"/>
    </location>
    <ligand>
        <name>[4Fe-4S] cluster</name>
        <dbReference type="ChEBI" id="CHEBI:49883"/>
        <note>4Fe-4S-S-AdoMet</note>
    </ligand>
</feature>
<feature type="binding site" evidence="1">
    <location>
        <position position="593"/>
    </location>
    <ligand>
        <name>[4Fe-4S] cluster</name>
        <dbReference type="ChEBI" id="CHEBI:49883"/>
        <note>4Fe-4S-S-AdoMet</note>
    </ligand>
</feature>
<feature type="binding site" evidence="1">
    <location>
        <position position="598"/>
    </location>
    <ligand>
        <name>[4Fe-4S] cluster</name>
        <dbReference type="ChEBI" id="CHEBI:49883"/>
        <note>4Fe-4S-S-AdoMet</note>
    </ligand>
</feature>
<sequence length="643" mass="71124">MNANPKFLSADARVDAAAVAPLPNSRKVYVTGSQPDIRVPMREITQADTPTSFGGEKNPPIYVYDTSGPYTDPDAKIDIRAGLPALRQRWIDARGDTETLAGLTSDYGRERAADPATAELRFPGLHRHPRRAKAGKNVTQMHYARQGIITPEMEYIAIRENQRRAEYLESLKASGPNGAKLAAMMGRQHAGQAFGAAAFGANAPAEITPEFVRDEVARGRAIIPANINHPETEPMIIGRNFLVKINANIGNSAVTSSIGEEVDKMTWAIRWGGDTVMDLSTGKHIHETREWIIRNSPVPIGTVPIYQALEKVNGKAEDLTWEIFRDTLIEQAEQGVDYFTIHAGVRLQYVPLTANRMTGIVSRGGSIMAKWCLAHHKESFLYEHFEEICEIMKAYDVSFSLGDGLRPGSIYDANDEAQLGELKTLGELTQIAWKHDVQVMIEGPGHVPMQLIKENMDLQLDWCKEAPFYTLGPLTTDIAPGYDHITSGIGAAMIGWFGTAMLCYVTPKEHLGLPNKDDVKEGIITYKLAAHAADLAKGHPGAQVRDNALSKARFEFRWQDQFNLGLDPDKAREFHDETLPKDSAKVAHFCSMCGPHFCSMKITQDVREFAAQQGVSENDALKKGMEVKAVEFVKSGSEIYHRQ</sequence>
<protein>
    <recommendedName>
        <fullName evidence="1">Phosphomethylpyrimidine synthase</fullName>
        <ecNumber evidence="1">4.1.99.17</ecNumber>
    </recommendedName>
    <alternativeName>
        <fullName evidence="1">Hydroxymethylpyrimidine phosphate synthase</fullName>
        <shortName evidence="1">HMP-P synthase</shortName>
        <shortName evidence="1">HMP-phosphate synthase</shortName>
        <shortName evidence="1">HMPP synthase</shortName>
    </alternativeName>
    <alternativeName>
        <fullName evidence="1">Thiamine biosynthesis protein ThiC</fullName>
    </alternativeName>
</protein>
<reference key="1">
    <citation type="journal article" date="2010" name="Genome Biol. Evol.">
        <title>Continuing evolution of Burkholderia mallei through genome reduction and large-scale rearrangements.</title>
        <authorList>
            <person name="Losada L."/>
            <person name="Ronning C.M."/>
            <person name="DeShazer D."/>
            <person name="Woods D."/>
            <person name="Fedorova N."/>
            <person name="Kim H.S."/>
            <person name="Shabalina S.A."/>
            <person name="Pearson T.R."/>
            <person name="Brinkac L."/>
            <person name="Tan P."/>
            <person name="Nandi T."/>
            <person name="Crabtree J."/>
            <person name="Badger J."/>
            <person name="Beckstrom-Sternberg S."/>
            <person name="Saqib M."/>
            <person name="Schutzer S.E."/>
            <person name="Keim P."/>
            <person name="Nierman W.C."/>
        </authorList>
    </citation>
    <scope>NUCLEOTIDE SEQUENCE [LARGE SCALE GENOMIC DNA]</scope>
    <source>
        <strain>1106a</strain>
    </source>
</reference>
<keyword id="KW-0004">4Fe-4S</keyword>
<keyword id="KW-0408">Iron</keyword>
<keyword id="KW-0411">Iron-sulfur</keyword>
<keyword id="KW-0456">Lyase</keyword>
<keyword id="KW-0479">Metal-binding</keyword>
<keyword id="KW-0949">S-adenosyl-L-methionine</keyword>
<keyword id="KW-0784">Thiamine biosynthesis</keyword>
<keyword id="KW-0862">Zinc</keyword>
<accession>A3NTK3</accession>
<evidence type="ECO:0000255" key="1">
    <source>
        <dbReference type="HAMAP-Rule" id="MF_00089"/>
    </source>
</evidence>
<name>THIC_BURP0</name>
<dbReference type="EC" id="4.1.99.17" evidence="1"/>
<dbReference type="EMBL" id="CP000572">
    <property type="protein sequence ID" value="ABN89566.1"/>
    <property type="molecule type" value="Genomic_DNA"/>
</dbReference>
<dbReference type="RefSeq" id="WP_004521865.1">
    <property type="nucleotide sequence ID" value="NC_009076.1"/>
</dbReference>
<dbReference type="SMR" id="A3NTK3"/>
<dbReference type="GeneID" id="93059779"/>
<dbReference type="KEGG" id="bpl:BURPS1106A_1401"/>
<dbReference type="HOGENOM" id="CLU_013181_2_1_4"/>
<dbReference type="UniPathway" id="UPA00060"/>
<dbReference type="Proteomes" id="UP000006738">
    <property type="component" value="Chromosome I"/>
</dbReference>
<dbReference type="GO" id="GO:0005829">
    <property type="term" value="C:cytosol"/>
    <property type="evidence" value="ECO:0007669"/>
    <property type="project" value="TreeGrafter"/>
</dbReference>
<dbReference type="GO" id="GO:0051539">
    <property type="term" value="F:4 iron, 4 sulfur cluster binding"/>
    <property type="evidence" value="ECO:0007669"/>
    <property type="project" value="UniProtKB-KW"/>
</dbReference>
<dbReference type="GO" id="GO:0016830">
    <property type="term" value="F:carbon-carbon lyase activity"/>
    <property type="evidence" value="ECO:0007669"/>
    <property type="project" value="InterPro"/>
</dbReference>
<dbReference type="GO" id="GO:0008270">
    <property type="term" value="F:zinc ion binding"/>
    <property type="evidence" value="ECO:0007669"/>
    <property type="project" value="UniProtKB-UniRule"/>
</dbReference>
<dbReference type="GO" id="GO:0009228">
    <property type="term" value="P:thiamine biosynthetic process"/>
    <property type="evidence" value="ECO:0007669"/>
    <property type="project" value="UniProtKB-KW"/>
</dbReference>
<dbReference type="GO" id="GO:0009229">
    <property type="term" value="P:thiamine diphosphate biosynthetic process"/>
    <property type="evidence" value="ECO:0007669"/>
    <property type="project" value="UniProtKB-UniRule"/>
</dbReference>
<dbReference type="FunFam" id="3.20.20.540:FF:000001">
    <property type="entry name" value="Phosphomethylpyrimidine synthase"/>
    <property type="match status" value="1"/>
</dbReference>
<dbReference type="Gene3D" id="6.10.250.620">
    <property type="match status" value="1"/>
</dbReference>
<dbReference type="Gene3D" id="3.20.20.540">
    <property type="entry name" value="Radical SAM ThiC family, central domain"/>
    <property type="match status" value="1"/>
</dbReference>
<dbReference type="HAMAP" id="MF_00089">
    <property type="entry name" value="ThiC"/>
    <property type="match status" value="1"/>
</dbReference>
<dbReference type="InterPro" id="IPR037509">
    <property type="entry name" value="ThiC"/>
</dbReference>
<dbReference type="InterPro" id="IPR025747">
    <property type="entry name" value="ThiC-associated_dom"/>
</dbReference>
<dbReference type="InterPro" id="IPR038521">
    <property type="entry name" value="ThiC/Bza_core_dom"/>
</dbReference>
<dbReference type="InterPro" id="IPR002817">
    <property type="entry name" value="ThiC/BzaA/B"/>
</dbReference>
<dbReference type="NCBIfam" id="NF006763">
    <property type="entry name" value="PRK09284.1"/>
    <property type="match status" value="1"/>
</dbReference>
<dbReference type="NCBIfam" id="NF009895">
    <property type="entry name" value="PRK13352.1"/>
    <property type="match status" value="1"/>
</dbReference>
<dbReference type="NCBIfam" id="TIGR00190">
    <property type="entry name" value="thiC"/>
    <property type="match status" value="1"/>
</dbReference>
<dbReference type="PANTHER" id="PTHR30557:SF1">
    <property type="entry name" value="PHOSPHOMETHYLPYRIMIDINE SYNTHASE, CHLOROPLASTIC"/>
    <property type="match status" value="1"/>
</dbReference>
<dbReference type="PANTHER" id="PTHR30557">
    <property type="entry name" value="THIAMINE BIOSYNTHESIS PROTEIN THIC"/>
    <property type="match status" value="1"/>
</dbReference>
<dbReference type="Pfam" id="PF13667">
    <property type="entry name" value="ThiC-associated"/>
    <property type="match status" value="1"/>
</dbReference>
<dbReference type="Pfam" id="PF01964">
    <property type="entry name" value="ThiC_Rad_SAM"/>
    <property type="match status" value="1"/>
</dbReference>
<dbReference type="SFLD" id="SFLDF00407">
    <property type="entry name" value="phosphomethylpyrimidine_syntha"/>
    <property type="match status" value="1"/>
</dbReference>
<dbReference type="SFLD" id="SFLDG01114">
    <property type="entry name" value="phosphomethylpyrimidine_syntha"/>
    <property type="match status" value="1"/>
</dbReference>
<dbReference type="SFLD" id="SFLDS00113">
    <property type="entry name" value="Radical_SAM_Phosphomethylpyrim"/>
    <property type="match status" value="1"/>
</dbReference>
<comment type="function">
    <text evidence="1">Catalyzes the synthesis of the hydroxymethylpyrimidine phosphate (HMP-P) moiety of thiamine from aminoimidazole ribotide (AIR) in a radical S-adenosyl-L-methionine (SAM)-dependent reaction.</text>
</comment>
<comment type="catalytic activity">
    <reaction evidence="1">
        <text>5-amino-1-(5-phospho-beta-D-ribosyl)imidazole + S-adenosyl-L-methionine = 4-amino-2-methyl-5-(phosphooxymethyl)pyrimidine + CO + 5'-deoxyadenosine + formate + L-methionine + 3 H(+)</text>
        <dbReference type="Rhea" id="RHEA:24840"/>
        <dbReference type="ChEBI" id="CHEBI:15378"/>
        <dbReference type="ChEBI" id="CHEBI:15740"/>
        <dbReference type="ChEBI" id="CHEBI:17245"/>
        <dbReference type="ChEBI" id="CHEBI:17319"/>
        <dbReference type="ChEBI" id="CHEBI:57844"/>
        <dbReference type="ChEBI" id="CHEBI:58354"/>
        <dbReference type="ChEBI" id="CHEBI:59789"/>
        <dbReference type="ChEBI" id="CHEBI:137981"/>
        <dbReference type="EC" id="4.1.99.17"/>
    </reaction>
</comment>
<comment type="cofactor">
    <cofactor evidence="1">
        <name>[4Fe-4S] cluster</name>
        <dbReference type="ChEBI" id="CHEBI:49883"/>
    </cofactor>
    <text evidence="1">Binds 1 [4Fe-4S] cluster per subunit. The cluster is coordinated with 3 cysteines and an exchangeable S-adenosyl-L-methionine.</text>
</comment>
<comment type="pathway">
    <text evidence="1">Cofactor biosynthesis; thiamine diphosphate biosynthesis.</text>
</comment>
<comment type="subunit">
    <text evidence="1">Homodimer.</text>
</comment>
<comment type="similarity">
    <text evidence="1">Belongs to the ThiC family.</text>
</comment>
<proteinExistence type="inferred from homology"/>
<organism>
    <name type="scientific">Burkholderia pseudomallei (strain 1106a)</name>
    <dbReference type="NCBI Taxonomy" id="357348"/>
    <lineage>
        <taxon>Bacteria</taxon>
        <taxon>Pseudomonadati</taxon>
        <taxon>Pseudomonadota</taxon>
        <taxon>Betaproteobacteria</taxon>
        <taxon>Burkholderiales</taxon>
        <taxon>Burkholderiaceae</taxon>
        <taxon>Burkholderia</taxon>
        <taxon>pseudomallei group</taxon>
    </lineage>
</organism>